<dbReference type="EC" id="5.2.1.8"/>
<dbReference type="EMBL" id="CR380957">
    <property type="protein sequence ID" value="CAG61604.1"/>
    <property type="molecule type" value="Genomic_DNA"/>
</dbReference>
<dbReference type="RefSeq" id="XP_448641.1">
    <property type="nucleotide sequence ID" value="XM_448641.1"/>
</dbReference>
<dbReference type="PDB" id="5HT1">
    <property type="method" value="X-ray"/>
    <property type="resolution" value="2.65 A"/>
    <property type="chains" value="A=1-114"/>
</dbReference>
<dbReference type="PDB" id="5HUA">
    <property type="method" value="X-ray"/>
    <property type="resolution" value="1.30 A"/>
    <property type="chains" value="A=1-114"/>
</dbReference>
<dbReference type="PDBsum" id="5HT1"/>
<dbReference type="PDBsum" id="5HUA"/>
<dbReference type="SMR" id="Q6FMA3"/>
<dbReference type="FunCoup" id="Q6FMA3">
    <property type="interactions" value="421"/>
</dbReference>
<dbReference type="STRING" id="284593.Q6FMA3"/>
<dbReference type="EnsemblFungi" id="CAGL0K09724g-T">
    <property type="protein sequence ID" value="CAGL0K09724g-T-p1"/>
    <property type="gene ID" value="CAGL0K09724g"/>
</dbReference>
<dbReference type="GeneID" id="2890244"/>
<dbReference type="KEGG" id="cgr:2890244"/>
<dbReference type="CGD" id="CAL0134605">
    <property type="gene designation" value="FPR1"/>
</dbReference>
<dbReference type="VEuPathDB" id="FungiDB:B1J91_K09724g"/>
<dbReference type="VEuPathDB" id="FungiDB:CAGL0K09724g"/>
<dbReference type="eggNOG" id="KOG0544">
    <property type="taxonomic scope" value="Eukaryota"/>
</dbReference>
<dbReference type="HOGENOM" id="CLU_013615_12_1_1"/>
<dbReference type="InParanoid" id="Q6FMA3"/>
<dbReference type="OMA" id="EQFDASW"/>
<dbReference type="Proteomes" id="UP000002428">
    <property type="component" value="Chromosome K"/>
</dbReference>
<dbReference type="GO" id="GO:0005737">
    <property type="term" value="C:cytoplasm"/>
    <property type="evidence" value="ECO:0007669"/>
    <property type="project" value="UniProtKB-SubCell"/>
</dbReference>
<dbReference type="GO" id="GO:0001228">
    <property type="term" value="F:DNA-binding transcription activator activity, RNA polymerase II-specific"/>
    <property type="evidence" value="ECO:0007669"/>
    <property type="project" value="EnsemblFungi"/>
</dbReference>
<dbReference type="GO" id="GO:0005527">
    <property type="term" value="F:macrolide binding"/>
    <property type="evidence" value="ECO:0007669"/>
    <property type="project" value="EnsemblFungi"/>
</dbReference>
<dbReference type="GO" id="GO:0003755">
    <property type="term" value="F:peptidyl-prolyl cis-trans isomerase activity"/>
    <property type="evidence" value="ECO:0007669"/>
    <property type="project" value="UniProtKB-KW"/>
</dbReference>
<dbReference type="GO" id="GO:0044183">
    <property type="term" value="F:protein folding chaperone"/>
    <property type="evidence" value="ECO:0007669"/>
    <property type="project" value="EnsemblFungi"/>
</dbReference>
<dbReference type="GO" id="GO:0006325">
    <property type="term" value="P:chromatin organization"/>
    <property type="evidence" value="ECO:0007669"/>
    <property type="project" value="EnsemblFungi"/>
</dbReference>
<dbReference type="GO" id="GO:1901711">
    <property type="term" value="P:negative regulation of homoserine biosynthetic process"/>
    <property type="evidence" value="ECO:0007669"/>
    <property type="project" value="EnsemblFungi"/>
</dbReference>
<dbReference type="GO" id="GO:0070651">
    <property type="term" value="P:nonfunctional rRNA decay"/>
    <property type="evidence" value="ECO:0007669"/>
    <property type="project" value="EnsemblFungi"/>
</dbReference>
<dbReference type="GO" id="GO:1903644">
    <property type="term" value="P:regulation of chaperone-mediated protein folding"/>
    <property type="evidence" value="ECO:0007669"/>
    <property type="project" value="EnsemblFungi"/>
</dbReference>
<dbReference type="GO" id="GO:0006366">
    <property type="term" value="P:transcription by RNA polymerase II"/>
    <property type="evidence" value="ECO:0007669"/>
    <property type="project" value="EnsemblFungi"/>
</dbReference>
<dbReference type="FunFam" id="3.10.50.40:FF:000025">
    <property type="entry name" value="Peptidylprolyl isomerase"/>
    <property type="match status" value="1"/>
</dbReference>
<dbReference type="Gene3D" id="3.10.50.40">
    <property type="match status" value="1"/>
</dbReference>
<dbReference type="InterPro" id="IPR050689">
    <property type="entry name" value="FKBP-type_PPIase"/>
</dbReference>
<dbReference type="InterPro" id="IPR046357">
    <property type="entry name" value="PPIase_dom_sf"/>
</dbReference>
<dbReference type="InterPro" id="IPR001179">
    <property type="entry name" value="PPIase_FKBP_dom"/>
</dbReference>
<dbReference type="PANTHER" id="PTHR10516:SF443">
    <property type="entry name" value="FK506-BINDING PROTEIN 59-RELATED"/>
    <property type="match status" value="1"/>
</dbReference>
<dbReference type="PANTHER" id="PTHR10516">
    <property type="entry name" value="PEPTIDYL-PROLYL CIS-TRANS ISOMERASE"/>
    <property type="match status" value="1"/>
</dbReference>
<dbReference type="Pfam" id="PF00254">
    <property type="entry name" value="FKBP_C"/>
    <property type="match status" value="1"/>
</dbReference>
<dbReference type="SUPFAM" id="SSF54534">
    <property type="entry name" value="FKBP-like"/>
    <property type="match status" value="1"/>
</dbReference>
<dbReference type="PROSITE" id="PS50059">
    <property type="entry name" value="FKBP_PPIASE"/>
    <property type="match status" value="1"/>
</dbReference>
<sequence>MSETIEGGVKIDRLSPGDGKTFPKQGDLVTIHYTGTLENGQKFDSSVDRGSPFQCNIGVGQVIKGWDAGIPKLSVGEKARLTIPGPYAYGPRGFPGLIPPNATLIFDVELLKVN</sequence>
<keyword id="KW-0002">3D-structure</keyword>
<keyword id="KW-0963">Cytoplasm</keyword>
<keyword id="KW-0413">Isomerase</keyword>
<keyword id="KW-1185">Reference proteome</keyword>
<keyword id="KW-0697">Rotamase</keyword>
<proteinExistence type="evidence at protein level"/>
<feature type="chain" id="PRO_0000233321" description="FK506-binding protein 1">
    <location>
        <begin position="1"/>
        <end position="114"/>
    </location>
</feature>
<feature type="domain" description="PPIase FKBP-type" evidence="2">
    <location>
        <begin position="26"/>
        <end position="114"/>
    </location>
</feature>
<feature type="strand" evidence="4">
    <location>
        <begin position="2"/>
        <end position="4"/>
    </location>
</feature>
<feature type="helix" evidence="5">
    <location>
        <begin position="6"/>
        <end position="8"/>
    </location>
</feature>
<feature type="strand" evidence="5">
    <location>
        <begin position="10"/>
        <end position="15"/>
    </location>
</feature>
<feature type="strand" evidence="5">
    <location>
        <begin position="28"/>
        <end position="37"/>
    </location>
</feature>
<feature type="strand" evidence="5">
    <location>
        <begin position="42"/>
        <end position="45"/>
    </location>
</feature>
<feature type="turn" evidence="5">
    <location>
        <begin position="46"/>
        <end position="50"/>
    </location>
</feature>
<feature type="strand" evidence="5">
    <location>
        <begin position="53"/>
        <end position="56"/>
    </location>
</feature>
<feature type="strand" evidence="5">
    <location>
        <begin position="59"/>
        <end position="62"/>
    </location>
</feature>
<feature type="helix" evidence="5">
    <location>
        <begin position="64"/>
        <end position="69"/>
    </location>
</feature>
<feature type="helix" evidence="5">
    <location>
        <begin position="70"/>
        <end position="72"/>
    </location>
</feature>
<feature type="strand" evidence="5">
    <location>
        <begin position="78"/>
        <end position="83"/>
    </location>
</feature>
<feature type="helix" evidence="5">
    <location>
        <begin position="85"/>
        <end position="87"/>
    </location>
</feature>
<feature type="turn" evidence="5">
    <location>
        <begin position="88"/>
        <end position="92"/>
    </location>
</feature>
<feature type="turn" evidence="5">
    <location>
        <begin position="95"/>
        <end position="97"/>
    </location>
</feature>
<feature type="strand" evidence="5">
    <location>
        <begin position="104"/>
        <end position="113"/>
    </location>
</feature>
<evidence type="ECO:0000250" key="1"/>
<evidence type="ECO:0000255" key="2">
    <source>
        <dbReference type="PROSITE-ProRule" id="PRU00277"/>
    </source>
</evidence>
<evidence type="ECO:0000305" key="3"/>
<evidence type="ECO:0007829" key="4">
    <source>
        <dbReference type="PDB" id="5HT1"/>
    </source>
</evidence>
<evidence type="ECO:0007829" key="5">
    <source>
        <dbReference type="PDB" id="5HUA"/>
    </source>
</evidence>
<organism>
    <name type="scientific">Candida glabrata (strain ATCC 2001 / BCRC 20586 / JCM 3761 / NBRC 0622 / NRRL Y-65 / CBS 138)</name>
    <name type="common">Yeast</name>
    <name type="synonym">Nakaseomyces glabratus</name>
    <dbReference type="NCBI Taxonomy" id="284593"/>
    <lineage>
        <taxon>Eukaryota</taxon>
        <taxon>Fungi</taxon>
        <taxon>Dikarya</taxon>
        <taxon>Ascomycota</taxon>
        <taxon>Saccharomycotina</taxon>
        <taxon>Saccharomycetes</taxon>
        <taxon>Saccharomycetales</taxon>
        <taxon>Saccharomycetaceae</taxon>
        <taxon>Nakaseomyces</taxon>
    </lineage>
</organism>
<gene>
    <name type="primary">FPR1</name>
    <name type="ordered locus">CAGL0K09724g</name>
</gene>
<comment type="function">
    <text evidence="1">PPIases accelerate the folding of proteins. It catalyzes the cis-trans isomerization of proline imidic peptide bonds in oligopeptides (By similarity).</text>
</comment>
<comment type="catalytic activity">
    <reaction>
        <text>[protein]-peptidylproline (omega=180) = [protein]-peptidylproline (omega=0)</text>
        <dbReference type="Rhea" id="RHEA:16237"/>
        <dbReference type="Rhea" id="RHEA-COMP:10747"/>
        <dbReference type="Rhea" id="RHEA-COMP:10748"/>
        <dbReference type="ChEBI" id="CHEBI:83833"/>
        <dbReference type="ChEBI" id="CHEBI:83834"/>
        <dbReference type="EC" id="5.2.1.8"/>
    </reaction>
</comment>
<comment type="activity regulation">
    <text evidence="1">Inhibited by both FK506 and rapamycin.</text>
</comment>
<comment type="subcellular location">
    <subcellularLocation>
        <location evidence="1">Cytoplasm</location>
    </subcellularLocation>
</comment>
<comment type="similarity">
    <text evidence="3">Belongs to the FKBP-type PPIase family. FKBP1 subfamily.</text>
</comment>
<name>FKBP_CANGA</name>
<accession>Q6FMA3</accession>
<protein>
    <recommendedName>
        <fullName>FK506-binding protein 1</fullName>
        <shortName>FKBP</shortName>
        <ecNumber>5.2.1.8</ecNumber>
    </recommendedName>
    <alternativeName>
        <fullName>Peptidyl-prolyl cis-trans isomerase</fullName>
        <shortName>PPIase</shortName>
    </alternativeName>
    <alternativeName>
        <fullName>Rapamycin-binding protein</fullName>
    </alternativeName>
</protein>
<reference key="1">
    <citation type="journal article" date="2004" name="Nature">
        <title>Genome evolution in yeasts.</title>
        <authorList>
            <person name="Dujon B."/>
            <person name="Sherman D."/>
            <person name="Fischer G."/>
            <person name="Durrens P."/>
            <person name="Casaregola S."/>
            <person name="Lafontaine I."/>
            <person name="de Montigny J."/>
            <person name="Marck C."/>
            <person name="Neuveglise C."/>
            <person name="Talla E."/>
            <person name="Goffard N."/>
            <person name="Frangeul L."/>
            <person name="Aigle M."/>
            <person name="Anthouard V."/>
            <person name="Babour A."/>
            <person name="Barbe V."/>
            <person name="Barnay S."/>
            <person name="Blanchin S."/>
            <person name="Beckerich J.-M."/>
            <person name="Beyne E."/>
            <person name="Bleykasten C."/>
            <person name="Boisrame A."/>
            <person name="Boyer J."/>
            <person name="Cattolico L."/>
            <person name="Confanioleri F."/>
            <person name="de Daruvar A."/>
            <person name="Despons L."/>
            <person name="Fabre E."/>
            <person name="Fairhead C."/>
            <person name="Ferry-Dumazet H."/>
            <person name="Groppi A."/>
            <person name="Hantraye F."/>
            <person name="Hennequin C."/>
            <person name="Jauniaux N."/>
            <person name="Joyet P."/>
            <person name="Kachouri R."/>
            <person name="Kerrest A."/>
            <person name="Koszul R."/>
            <person name="Lemaire M."/>
            <person name="Lesur I."/>
            <person name="Ma L."/>
            <person name="Muller H."/>
            <person name="Nicaud J.-M."/>
            <person name="Nikolski M."/>
            <person name="Oztas S."/>
            <person name="Ozier-Kalogeropoulos O."/>
            <person name="Pellenz S."/>
            <person name="Potier S."/>
            <person name="Richard G.-F."/>
            <person name="Straub M.-L."/>
            <person name="Suleau A."/>
            <person name="Swennen D."/>
            <person name="Tekaia F."/>
            <person name="Wesolowski-Louvel M."/>
            <person name="Westhof E."/>
            <person name="Wirth B."/>
            <person name="Zeniou-Meyer M."/>
            <person name="Zivanovic Y."/>
            <person name="Bolotin-Fukuhara M."/>
            <person name="Thierry A."/>
            <person name="Bouchier C."/>
            <person name="Caudron B."/>
            <person name="Scarpelli C."/>
            <person name="Gaillardin C."/>
            <person name="Weissenbach J."/>
            <person name="Wincker P."/>
            <person name="Souciet J.-L."/>
        </authorList>
    </citation>
    <scope>NUCLEOTIDE SEQUENCE [LARGE SCALE GENOMIC DNA]</scope>
    <source>
        <strain>ATCC 2001 / BCRC 20586 / JCM 3761 / NBRC 0622 / NRRL Y-65 / CBS 138</strain>
    </source>
</reference>